<accession>Q6NWC9</accession>
<accession>Q503P0</accession>
<accession>Q7SYM2</accession>
<keyword id="KW-0175">Coiled coil</keyword>
<keyword id="KW-0333">Golgi apparatus</keyword>
<keyword id="KW-1185">Reference proteome</keyword>
<comment type="function">
    <text evidence="1">May play a role in the regulation of insulin-dependent IRS1 tyrosine phosphorylation in adipocytes.</text>
</comment>
<comment type="subcellular location">
    <subcellularLocation>
        <location evidence="1">Golgi apparatus</location>
    </subcellularLocation>
</comment>
<comment type="similarity">
    <text evidence="4">Belongs to the GKAP1 family.</text>
</comment>
<comment type="sequence caution" evidence="4">
    <conflict type="frameshift">
        <sequence resource="EMBL-CDS" id="AAH95240"/>
    </conflict>
</comment>
<dbReference type="EMBL" id="BC054663">
    <property type="protein sequence ID" value="AAH54663.1"/>
    <property type="molecule type" value="mRNA"/>
</dbReference>
<dbReference type="EMBL" id="BC067639">
    <property type="protein sequence ID" value="AAH67639.1"/>
    <property type="molecule type" value="mRNA"/>
</dbReference>
<dbReference type="EMBL" id="BC095240">
    <property type="protein sequence ID" value="AAH95240.1"/>
    <property type="status" value="ALT_FRAME"/>
    <property type="molecule type" value="mRNA"/>
</dbReference>
<dbReference type="RefSeq" id="NP_998237.1">
    <property type="nucleotide sequence ID" value="NM_213072.2"/>
</dbReference>
<dbReference type="RefSeq" id="XP_005167378.1">
    <property type="nucleotide sequence ID" value="XM_005167321.5"/>
</dbReference>
<dbReference type="SMR" id="Q6NWC9"/>
<dbReference type="FunCoup" id="Q6NWC9">
    <property type="interactions" value="760"/>
</dbReference>
<dbReference type="STRING" id="7955.ENSDARP00000089091"/>
<dbReference type="PaxDb" id="7955-ENSDARP00000012352"/>
<dbReference type="Ensembl" id="ENSDART00000098319">
    <property type="protein sequence ID" value="ENSDARP00000089091"/>
    <property type="gene ID" value="ENSDARG00000068123"/>
</dbReference>
<dbReference type="GeneID" id="406581"/>
<dbReference type="KEGG" id="dre:406581"/>
<dbReference type="AGR" id="ZFIN:ZDB-GENE-040426-2485"/>
<dbReference type="CTD" id="80318"/>
<dbReference type="ZFIN" id="ZDB-GENE-040426-2485">
    <property type="gene designation" value="gkap1"/>
</dbReference>
<dbReference type="eggNOG" id="ENOG502QUT6">
    <property type="taxonomic scope" value="Eukaryota"/>
</dbReference>
<dbReference type="HOGENOM" id="CLU_065161_1_0_1"/>
<dbReference type="InParanoid" id="Q6NWC9"/>
<dbReference type="OMA" id="RKNHQGR"/>
<dbReference type="OrthoDB" id="5864420at2759"/>
<dbReference type="PhylomeDB" id="Q6NWC9"/>
<dbReference type="TreeFam" id="TF328459"/>
<dbReference type="PRO" id="PR:Q6NWC9"/>
<dbReference type="Proteomes" id="UP000000437">
    <property type="component" value="Chromosome 8"/>
</dbReference>
<dbReference type="Bgee" id="ENSDARG00000068123">
    <property type="expression patterns" value="Expressed in mature ovarian follicle and 26 other cell types or tissues"/>
</dbReference>
<dbReference type="ExpressionAtlas" id="Q6NWC9">
    <property type="expression patterns" value="baseline"/>
</dbReference>
<dbReference type="GO" id="GO:0005794">
    <property type="term" value="C:Golgi apparatus"/>
    <property type="evidence" value="ECO:0007669"/>
    <property type="project" value="UniProtKB-SubCell"/>
</dbReference>
<dbReference type="GO" id="GO:0007165">
    <property type="term" value="P:signal transduction"/>
    <property type="evidence" value="ECO:0000318"/>
    <property type="project" value="GO_Central"/>
</dbReference>
<dbReference type="InterPro" id="IPR026109">
    <property type="entry name" value="GKAP1"/>
</dbReference>
<dbReference type="PANTHER" id="PTHR14899">
    <property type="entry name" value="G KINASE ANCHORING PROTEIN 1"/>
    <property type="match status" value="1"/>
</dbReference>
<dbReference type="PANTHER" id="PTHR14899:SF0">
    <property type="entry name" value="G KINASE-ANCHORING PROTEIN 1"/>
    <property type="match status" value="1"/>
</dbReference>
<dbReference type="PRINTS" id="PR02083">
    <property type="entry name" value="GKINASEAP1"/>
</dbReference>
<sequence>MASAVISVPTTASRFALLQVDSDSDSDSDVGKPKAAGRGAGKPRSGKSPSGKNSQNNEKKKEKRRRKKEQQQSEANELRSLAFKKIPQKSTAPPSLTLQDLANDLINPANVQQGSKPQENWQEWKQRDEQLTSDLYEADLEKALMLSKLEFEEHKKDADKAETASPKTKTGGKKDRKKNQQGKDKRVTVSLKDFQQEDQLKNKPEREPVNPALRDDKFFNKLEDDVSKIVQRDKRREQYSNSAGQEVNTSSEHEQDVRTEQLKYELEKKDQEIAKLKKTISQWEERYKEVKARNSQLLKMLQQGEMKDKAEILLQVEELLNIKEELSSQVTQLHTALEQERSKVKGLQSEQPKHQGNRKGKKASEGDV</sequence>
<reference key="1">
    <citation type="submission" date="2004-03" db="EMBL/GenBank/DDBJ databases">
        <authorList>
            <consortium name="NIH - Zebrafish Gene Collection (ZGC) project"/>
        </authorList>
    </citation>
    <scope>NUCLEOTIDE SEQUENCE [LARGE SCALE MRNA]</scope>
    <source>
        <strain>AB</strain>
        <tissue>Kidney</tissue>
    </source>
</reference>
<evidence type="ECO:0000250" key="1">
    <source>
        <dbReference type="UniProtKB" id="Q9JMB0"/>
    </source>
</evidence>
<evidence type="ECO:0000255" key="2"/>
<evidence type="ECO:0000256" key="3">
    <source>
        <dbReference type="SAM" id="MobiDB-lite"/>
    </source>
</evidence>
<evidence type="ECO:0000305" key="4"/>
<protein>
    <recommendedName>
        <fullName>G kinase-anchoring protein 1</fullName>
    </recommendedName>
</protein>
<name>GKAP1_DANRE</name>
<gene>
    <name type="primary">gkap1</name>
    <name type="ORF">zgc:85804</name>
</gene>
<feature type="chain" id="PRO_0000315657" description="G kinase-anchoring protein 1">
    <location>
        <begin position="1"/>
        <end position="368"/>
    </location>
</feature>
<feature type="region of interest" description="Disordered" evidence="3">
    <location>
        <begin position="18"/>
        <end position="127"/>
    </location>
</feature>
<feature type="region of interest" description="Disordered" evidence="3">
    <location>
        <begin position="152"/>
        <end position="260"/>
    </location>
</feature>
<feature type="region of interest" description="Disordered" evidence="3">
    <location>
        <begin position="333"/>
        <end position="368"/>
    </location>
</feature>
<feature type="coiled-coil region" evidence="2">
    <location>
        <begin position="52"/>
        <end position="82"/>
    </location>
</feature>
<feature type="coiled-coil region" evidence="2">
    <location>
        <begin position="256"/>
        <end position="350"/>
    </location>
</feature>
<feature type="compositionally biased region" description="Low complexity" evidence="3">
    <location>
        <begin position="33"/>
        <end position="56"/>
    </location>
</feature>
<feature type="compositionally biased region" description="Polar residues" evidence="3">
    <location>
        <begin position="88"/>
        <end position="100"/>
    </location>
</feature>
<feature type="compositionally biased region" description="Polar residues" evidence="3">
    <location>
        <begin position="109"/>
        <end position="121"/>
    </location>
</feature>
<feature type="compositionally biased region" description="Basic and acidic residues" evidence="3">
    <location>
        <begin position="152"/>
        <end position="162"/>
    </location>
</feature>
<feature type="compositionally biased region" description="Basic residues" evidence="3">
    <location>
        <begin position="170"/>
        <end position="180"/>
    </location>
</feature>
<feature type="compositionally biased region" description="Basic and acidic residues" evidence="3">
    <location>
        <begin position="194"/>
        <end position="238"/>
    </location>
</feature>
<feature type="compositionally biased region" description="Polar residues" evidence="3">
    <location>
        <begin position="239"/>
        <end position="250"/>
    </location>
</feature>
<feature type="compositionally biased region" description="Basic and acidic residues" evidence="3">
    <location>
        <begin position="251"/>
        <end position="260"/>
    </location>
</feature>
<feature type="sequence conflict" description="In Ref. 1; AAH54663." evidence="4" ref="1">
    <original>F</original>
    <variation>L</variation>
    <location>
        <position position="15"/>
    </location>
</feature>
<feature type="sequence conflict" description="In Ref. 1; AAH95240." evidence="4" ref="1">
    <original>Q</original>
    <variation>L</variation>
    <location>
        <position position="261"/>
    </location>
</feature>
<feature type="sequence conflict" description="In Ref. 1; AAH54663." evidence="4" ref="1">
    <original>V</original>
    <variation>A</variation>
    <location>
        <position position="290"/>
    </location>
</feature>
<organism>
    <name type="scientific">Danio rerio</name>
    <name type="common">Zebrafish</name>
    <name type="synonym">Brachydanio rerio</name>
    <dbReference type="NCBI Taxonomy" id="7955"/>
    <lineage>
        <taxon>Eukaryota</taxon>
        <taxon>Metazoa</taxon>
        <taxon>Chordata</taxon>
        <taxon>Craniata</taxon>
        <taxon>Vertebrata</taxon>
        <taxon>Euteleostomi</taxon>
        <taxon>Actinopterygii</taxon>
        <taxon>Neopterygii</taxon>
        <taxon>Teleostei</taxon>
        <taxon>Ostariophysi</taxon>
        <taxon>Cypriniformes</taxon>
        <taxon>Danionidae</taxon>
        <taxon>Danioninae</taxon>
        <taxon>Danio</taxon>
    </lineage>
</organism>
<proteinExistence type="evidence at transcript level"/>